<feature type="chain" id="PRO_0000408022" description="Venom protein HR-3">
    <location>
        <begin position="1" status="less than"/>
        <end position="9" status="greater than"/>
    </location>
</feature>
<feature type="non-terminal residue">
    <location>
        <position position="1"/>
    </location>
</feature>
<feature type="non-terminal residue">
    <location>
        <position position="9"/>
    </location>
</feature>
<protein>
    <recommendedName>
        <fullName>Venom protein HR-3</fullName>
    </recommendedName>
</protein>
<proteinExistence type="evidence at protein level"/>
<dbReference type="PIR" id="S10920">
    <property type="entry name" value="S10920"/>
</dbReference>
<dbReference type="GO" id="GO:0005576">
    <property type="term" value="C:extracellular region"/>
    <property type="evidence" value="ECO:0007669"/>
    <property type="project" value="UniProtKB-SubCell"/>
</dbReference>
<organism>
    <name type="scientific">Vespa orientalis</name>
    <name type="common">Oriental hornet</name>
    <dbReference type="NCBI Taxonomy" id="7447"/>
    <lineage>
        <taxon>Eukaryota</taxon>
        <taxon>Metazoa</taxon>
        <taxon>Ecdysozoa</taxon>
        <taxon>Arthropoda</taxon>
        <taxon>Hexapoda</taxon>
        <taxon>Insecta</taxon>
        <taxon>Pterygota</taxon>
        <taxon>Neoptera</taxon>
        <taxon>Endopterygota</taxon>
        <taxon>Hymenoptera</taxon>
        <taxon>Apocrita</taxon>
        <taxon>Aculeata</taxon>
        <taxon>Vespoidea</taxon>
        <taxon>Vespidae</taxon>
        <taxon>Vespinae</taxon>
        <taxon>Vespa</taxon>
    </lineage>
</organism>
<keyword id="KW-0903">Direct protein sequencing</keyword>
<keyword id="KW-0467">Mast cell degranulation</keyword>
<keyword id="KW-0964">Secreted</keyword>
<accession>Q7M471</accession>
<reference key="1">
    <citation type="journal article" date="1988" name="Biokhimiia">
        <title>Low-molecular-weight peptides of venom of the giant hornet Vespa orientalis. Structure and function.</title>
        <authorList>
            <person name="Tuichibaev M.U."/>
            <person name="Akhmedova N.U."/>
            <person name="Kazakov I."/>
            <person name="Korneev A.S."/>
            <person name="Gagel'gans A.I."/>
        </authorList>
    </citation>
    <scope>PROTEIN SEQUENCE</scope>
    <source>
        <tissue>Venom</tissue>
    </source>
</reference>
<sequence>ASVHEFLVK</sequence>
<comment type="function">
    <text>Mast cell degranulating peptide.</text>
</comment>
<comment type="subcellular location">
    <subcellularLocation>
        <location>Secreted</location>
    </subcellularLocation>
</comment>
<comment type="tissue specificity">
    <text>Expressed by the venom gland.</text>
</comment>
<name>HR3_VESOR</name>